<sequence>MPKSKVRKKNDFTVKPVSRTPVKVKVGPSSVWFVALFIGLMLIGLVWLMVFQLAAVGSQAPAALNWMAQLGPWNYAIAFAFMITGLLLTMRWH</sequence>
<comment type="function">
    <text evidence="1">Involved in cell division.</text>
</comment>
<comment type="subcellular location">
    <subcellularLocation>
        <location evidence="1">Cell membrane</location>
        <topology evidence="1">Multi-pass membrane protein</topology>
    </subcellularLocation>
</comment>
<comment type="similarity">
    <text evidence="1">Belongs to the CrgA family.</text>
</comment>
<accession>A0PKC4</accession>
<proteinExistence type="inferred from homology"/>
<name>CRGA_MYCUA</name>
<gene>
    <name evidence="1" type="primary">crgA</name>
    <name type="ordered locus">MUL_0015</name>
</gene>
<reference key="1">
    <citation type="journal article" date="2007" name="Genome Res.">
        <title>Reductive evolution and niche adaptation inferred from the genome of Mycobacterium ulcerans, the causative agent of Buruli ulcer.</title>
        <authorList>
            <person name="Stinear T.P."/>
            <person name="Seemann T."/>
            <person name="Pidot S."/>
            <person name="Frigui W."/>
            <person name="Reysset G."/>
            <person name="Garnier T."/>
            <person name="Meurice G."/>
            <person name="Simon D."/>
            <person name="Bouchier C."/>
            <person name="Ma L."/>
            <person name="Tichit M."/>
            <person name="Porter J.L."/>
            <person name="Ryan J."/>
            <person name="Johnson P.D.R."/>
            <person name="Davies J.K."/>
            <person name="Jenkin G.A."/>
            <person name="Small P.L.C."/>
            <person name="Jones L.M."/>
            <person name="Tekaia F."/>
            <person name="Laval F."/>
            <person name="Daffe M."/>
            <person name="Parkhill J."/>
            <person name="Cole S.T."/>
        </authorList>
    </citation>
    <scope>NUCLEOTIDE SEQUENCE [LARGE SCALE GENOMIC DNA]</scope>
    <source>
        <strain>Agy99</strain>
    </source>
</reference>
<organism>
    <name type="scientific">Mycobacterium ulcerans (strain Agy99)</name>
    <dbReference type="NCBI Taxonomy" id="362242"/>
    <lineage>
        <taxon>Bacteria</taxon>
        <taxon>Bacillati</taxon>
        <taxon>Actinomycetota</taxon>
        <taxon>Actinomycetes</taxon>
        <taxon>Mycobacteriales</taxon>
        <taxon>Mycobacteriaceae</taxon>
        <taxon>Mycobacterium</taxon>
        <taxon>Mycobacterium ulcerans group</taxon>
    </lineage>
</organism>
<feature type="chain" id="PRO_1000051708" description="Cell division protein CrgA">
    <location>
        <begin position="1"/>
        <end position="93"/>
    </location>
</feature>
<feature type="transmembrane region" description="Helical" evidence="1">
    <location>
        <begin position="31"/>
        <end position="51"/>
    </location>
</feature>
<feature type="transmembrane region" description="Helical" evidence="1">
    <location>
        <begin position="70"/>
        <end position="90"/>
    </location>
</feature>
<evidence type="ECO:0000255" key="1">
    <source>
        <dbReference type="HAMAP-Rule" id="MF_00631"/>
    </source>
</evidence>
<dbReference type="EMBL" id="CP000325">
    <property type="protein sequence ID" value="ABL02793.1"/>
    <property type="molecule type" value="Genomic_DNA"/>
</dbReference>
<dbReference type="RefSeq" id="WP_011738418.1">
    <property type="nucleotide sequence ID" value="NC_008611.1"/>
</dbReference>
<dbReference type="SMR" id="A0PKC4"/>
<dbReference type="GeneID" id="93434700"/>
<dbReference type="KEGG" id="mul:MUL_0015"/>
<dbReference type="eggNOG" id="ENOG5031Y35">
    <property type="taxonomic scope" value="Bacteria"/>
</dbReference>
<dbReference type="HOGENOM" id="CLU_149126_2_0_11"/>
<dbReference type="Proteomes" id="UP000000765">
    <property type="component" value="Chromosome"/>
</dbReference>
<dbReference type="GO" id="GO:0005886">
    <property type="term" value="C:plasma membrane"/>
    <property type="evidence" value="ECO:0007669"/>
    <property type="project" value="UniProtKB-SubCell"/>
</dbReference>
<dbReference type="GO" id="GO:0051301">
    <property type="term" value="P:cell division"/>
    <property type="evidence" value="ECO:0007669"/>
    <property type="project" value="UniProtKB-UniRule"/>
</dbReference>
<dbReference type="HAMAP" id="MF_00631">
    <property type="entry name" value="CrgA"/>
    <property type="match status" value="1"/>
</dbReference>
<dbReference type="InterPro" id="IPR009619">
    <property type="entry name" value="CrgA"/>
</dbReference>
<dbReference type="NCBIfam" id="NF001194">
    <property type="entry name" value="PRK00159.1"/>
    <property type="match status" value="1"/>
</dbReference>
<dbReference type="Pfam" id="PF06781">
    <property type="entry name" value="CrgA"/>
    <property type="match status" value="1"/>
</dbReference>
<keyword id="KW-0131">Cell cycle</keyword>
<keyword id="KW-0132">Cell division</keyword>
<keyword id="KW-1003">Cell membrane</keyword>
<keyword id="KW-0472">Membrane</keyword>
<keyword id="KW-0812">Transmembrane</keyword>
<keyword id="KW-1133">Transmembrane helix</keyword>
<protein>
    <recommendedName>
        <fullName evidence="1">Cell division protein CrgA</fullName>
    </recommendedName>
</protein>